<protein>
    <recommendedName>
        <fullName>UDP-N-acetylglucosamine transferase subunit ALG13</fullName>
        <ecNumber>2.4.1.141</ecNumber>
    </recommendedName>
    <alternativeName>
        <fullName>Asparagine-linked glycosylation protein 13</fullName>
    </alternativeName>
</protein>
<organism>
    <name type="scientific">Candida albicans (strain SC5314 / ATCC MYA-2876)</name>
    <name type="common">Yeast</name>
    <dbReference type="NCBI Taxonomy" id="237561"/>
    <lineage>
        <taxon>Eukaryota</taxon>
        <taxon>Fungi</taxon>
        <taxon>Dikarya</taxon>
        <taxon>Ascomycota</taxon>
        <taxon>Saccharomycotina</taxon>
        <taxon>Pichiomycetes</taxon>
        <taxon>Debaryomycetaceae</taxon>
        <taxon>Candida/Lodderomyces clade</taxon>
        <taxon>Candida</taxon>
    </lineage>
</organism>
<gene>
    <name type="primary">ALG13</name>
    <name type="ordered locus">CAALFM_C100810WA</name>
    <name type="ORF">CaO19.13446</name>
    <name type="ORF">CaO19.6025</name>
</gene>
<comment type="function">
    <text evidence="1">Involved in protein N-glycosylation. Essential for the second step of the dolichol-linked oligosaccharide pathway (By similarity).</text>
</comment>
<comment type="catalytic activity">
    <reaction>
        <text>an N-acetyl-alpha-D-glucosaminyl-diphospho-di-trans,poly-cis-dolichol + UDP-N-acetyl-alpha-D-glucosamine = an N,N'-diacetylchitobiosyl-diphospho-di-trans,poly-cis-dolichol + UDP + H(+)</text>
        <dbReference type="Rhea" id="RHEA:23380"/>
        <dbReference type="Rhea" id="RHEA-COMP:19507"/>
        <dbReference type="Rhea" id="RHEA-COMP:19510"/>
        <dbReference type="ChEBI" id="CHEBI:15378"/>
        <dbReference type="ChEBI" id="CHEBI:57269"/>
        <dbReference type="ChEBI" id="CHEBI:57705"/>
        <dbReference type="ChEBI" id="CHEBI:58223"/>
        <dbReference type="ChEBI" id="CHEBI:58427"/>
        <dbReference type="EC" id="2.4.1.141"/>
    </reaction>
</comment>
<comment type="subunit">
    <text evidence="1">Heterodimer with ALG14 to form a functional enzyme.</text>
</comment>
<comment type="subcellular location">
    <subcellularLocation>
        <location evidence="1">Endoplasmic reticulum</location>
    </subcellularLocation>
</comment>
<comment type="similarity">
    <text evidence="2">Belongs to the glycosyltransferase 28 family.</text>
</comment>
<feature type="chain" id="PRO_0000215598" description="UDP-N-acetylglucosamine transferase subunit ALG13">
    <location>
        <begin position="1"/>
        <end position="293"/>
    </location>
</feature>
<evidence type="ECO:0000250" key="1"/>
<evidence type="ECO:0000305" key="2"/>
<proteinExistence type="inferred from homology"/>
<keyword id="KW-0256">Endoplasmic reticulum</keyword>
<keyword id="KW-0328">Glycosyltransferase</keyword>
<keyword id="KW-1185">Reference proteome</keyword>
<keyword id="KW-0808">Transferase</keyword>
<name>ALG13_CANAL</name>
<accession>Q5ABE5</accession>
<accession>A0A1D8PCC1</accession>
<dbReference type="EC" id="2.4.1.141"/>
<dbReference type="EMBL" id="CP017623">
    <property type="protein sequence ID" value="AOW25778.1"/>
    <property type="molecule type" value="Genomic_DNA"/>
</dbReference>
<dbReference type="RefSeq" id="XP_718987.2">
    <property type="nucleotide sequence ID" value="XM_713894.2"/>
</dbReference>
<dbReference type="SMR" id="Q5ABE5"/>
<dbReference type="FunCoup" id="Q5ABE5">
    <property type="interactions" value="350"/>
</dbReference>
<dbReference type="STRING" id="237561.Q5ABE5"/>
<dbReference type="EnsemblFungi" id="C1_00810W_A-T">
    <property type="protein sequence ID" value="C1_00810W_A-T-p1"/>
    <property type="gene ID" value="C1_00810W_A"/>
</dbReference>
<dbReference type="GeneID" id="3639346"/>
<dbReference type="KEGG" id="cal:CAALFM_C100810WA"/>
<dbReference type="CGD" id="CAL0000194250">
    <property type="gene designation" value="orf19.13446"/>
</dbReference>
<dbReference type="VEuPathDB" id="FungiDB:C1_00810W_A"/>
<dbReference type="eggNOG" id="KOG3349">
    <property type="taxonomic scope" value="Eukaryota"/>
</dbReference>
<dbReference type="HOGENOM" id="CLU_085408_2_0_1"/>
<dbReference type="InParanoid" id="Q5ABE5"/>
<dbReference type="OrthoDB" id="20273at2759"/>
<dbReference type="PRO" id="PR:Q5ABE5"/>
<dbReference type="Proteomes" id="UP000000559">
    <property type="component" value="Chromosome 1"/>
</dbReference>
<dbReference type="GO" id="GO:0005783">
    <property type="term" value="C:endoplasmic reticulum"/>
    <property type="evidence" value="ECO:0007669"/>
    <property type="project" value="UniProtKB-SubCell"/>
</dbReference>
<dbReference type="GO" id="GO:0004577">
    <property type="term" value="F:N-acetylglucosaminyldiphosphodolichol N-acetylglucosaminyltransferase activity"/>
    <property type="evidence" value="ECO:0007669"/>
    <property type="project" value="UniProtKB-EC"/>
</dbReference>
<dbReference type="GO" id="GO:0006488">
    <property type="term" value="P:dolichol-linked oligosaccharide biosynthetic process"/>
    <property type="evidence" value="ECO:0007669"/>
    <property type="project" value="InterPro"/>
</dbReference>
<dbReference type="Gene3D" id="3.40.50.2000">
    <property type="entry name" value="Glycogen Phosphorylase B"/>
    <property type="match status" value="1"/>
</dbReference>
<dbReference type="InterPro" id="IPR039042">
    <property type="entry name" value="Alg13-like"/>
</dbReference>
<dbReference type="InterPro" id="IPR007235">
    <property type="entry name" value="Glyco_trans_28_C"/>
</dbReference>
<dbReference type="PANTHER" id="PTHR12867">
    <property type="entry name" value="GLYCOSYL TRANSFERASE-RELATED"/>
    <property type="match status" value="1"/>
</dbReference>
<dbReference type="PANTHER" id="PTHR12867:SF6">
    <property type="entry name" value="N-ACETYLGLUCOSAMINYLDIPHOSPHODOLICHOL N-ACETYLGLUCOSAMINYLTRANSFERASE"/>
    <property type="match status" value="1"/>
</dbReference>
<dbReference type="Pfam" id="PF04101">
    <property type="entry name" value="Glyco_tran_28_C"/>
    <property type="match status" value="1"/>
</dbReference>
<dbReference type="SUPFAM" id="SSF53756">
    <property type="entry name" value="UDP-Glycosyltransferase/glycogen phosphorylase"/>
    <property type="match status" value="1"/>
</dbReference>
<reference key="1">
    <citation type="journal article" date="2004" name="Proc. Natl. Acad. Sci. U.S.A.">
        <title>The diploid genome sequence of Candida albicans.</title>
        <authorList>
            <person name="Jones T."/>
            <person name="Federspiel N.A."/>
            <person name="Chibana H."/>
            <person name="Dungan J."/>
            <person name="Kalman S."/>
            <person name="Magee B.B."/>
            <person name="Newport G."/>
            <person name="Thorstenson Y.R."/>
            <person name="Agabian N."/>
            <person name="Magee P.T."/>
            <person name="Davis R.W."/>
            <person name="Scherer S."/>
        </authorList>
    </citation>
    <scope>NUCLEOTIDE SEQUENCE [LARGE SCALE GENOMIC DNA]</scope>
    <source>
        <strain>SC5314 / ATCC MYA-2876</strain>
    </source>
</reference>
<reference key="2">
    <citation type="journal article" date="2007" name="Genome Biol.">
        <title>Assembly of the Candida albicans genome into sixteen supercontigs aligned on the eight chromosomes.</title>
        <authorList>
            <person name="van het Hoog M."/>
            <person name="Rast T.J."/>
            <person name="Martchenko M."/>
            <person name="Grindle S."/>
            <person name="Dignard D."/>
            <person name="Hogues H."/>
            <person name="Cuomo C."/>
            <person name="Berriman M."/>
            <person name="Scherer S."/>
            <person name="Magee B.B."/>
            <person name="Whiteway M."/>
            <person name="Chibana H."/>
            <person name="Nantel A."/>
            <person name="Magee P.T."/>
        </authorList>
    </citation>
    <scope>GENOME REANNOTATION</scope>
    <source>
        <strain>SC5314 / ATCC MYA-2876</strain>
    </source>
</reference>
<reference key="3">
    <citation type="journal article" date="2013" name="Genome Biol.">
        <title>Assembly of a phased diploid Candida albicans genome facilitates allele-specific measurements and provides a simple model for repeat and indel structure.</title>
        <authorList>
            <person name="Muzzey D."/>
            <person name="Schwartz K."/>
            <person name="Weissman J.S."/>
            <person name="Sherlock G."/>
        </authorList>
    </citation>
    <scope>NUCLEOTIDE SEQUENCE [LARGE SCALE GENOMIC DNA]</scope>
    <scope>GENOME REANNOTATION</scope>
    <source>
        <strain>SC5314 / ATCC MYA-2876</strain>
    </source>
</reference>
<sequence length="293" mass="34283">MFDWRRLKPLRPHQIFFFYTTIQNYSDNGYQYSYKSNQIKSNQIKLNQQQQTSRQLIRINNQLPPSVVLHNIIMKSILITTGATITFKSLIQIILSPQFLNNLIRLKINKLIIQYGHEIKNSINLSESFFNETINKYDLINLFNLEIEETPIGDDDDDEGIRLFKNSDIEILAFSYSSNINKYIENVDLIISHAGTGSIIDCLHLNKPLIVIVNDKLMDNHQLEIAQQFTKLNYCIYYSIKELEQYVNNNDNNKDSRFWNQLNQLINGELQLNKLPQTDGSIIETIICEELEK</sequence>